<sequence length="175" mass="18536">MADPARARRLAKRITTIVASAIEYEIKDPGLVGVTITDAKVTADLHDATVYYTVMGPTLDGEPDYAAAAAALERAKGVLRTKVGAGTGVRFTPTLTFTRDVTSDTVHRMDELLARARAADADLARVRVGAKPAGEADPYRDRGSVDEPSDAGGLVIRTSDGLEAENTGDDYQAED</sequence>
<keyword id="KW-0963">Cytoplasm</keyword>
<keyword id="KW-0690">Ribosome biogenesis</keyword>
<feature type="chain" id="PRO_1000000148" description="Ribosome-binding factor A">
    <location>
        <begin position="1"/>
        <end position="175"/>
    </location>
</feature>
<feature type="region of interest" description="Disordered" evidence="2">
    <location>
        <begin position="131"/>
        <end position="175"/>
    </location>
</feature>
<feature type="compositionally biased region" description="Acidic residues" evidence="2">
    <location>
        <begin position="162"/>
        <end position="175"/>
    </location>
</feature>
<reference key="1">
    <citation type="journal article" date="2007" name="Genome Res.">
        <title>Reductive evolution and niche adaptation inferred from the genome of Mycobacterium ulcerans, the causative agent of Buruli ulcer.</title>
        <authorList>
            <person name="Stinear T.P."/>
            <person name="Seemann T."/>
            <person name="Pidot S."/>
            <person name="Frigui W."/>
            <person name="Reysset G."/>
            <person name="Garnier T."/>
            <person name="Meurice G."/>
            <person name="Simon D."/>
            <person name="Bouchier C."/>
            <person name="Ma L."/>
            <person name="Tichit M."/>
            <person name="Porter J.L."/>
            <person name="Ryan J."/>
            <person name="Johnson P.D.R."/>
            <person name="Davies J.K."/>
            <person name="Jenkin G.A."/>
            <person name="Small P.L.C."/>
            <person name="Jones L.M."/>
            <person name="Tekaia F."/>
            <person name="Laval F."/>
            <person name="Daffe M."/>
            <person name="Parkhill J."/>
            <person name="Cole S.T."/>
        </authorList>
    </citation>
    <scope>NUCLEOTIDE SEQUENCE [LARGE SCALE GENOMIC DNA]</scope>
    <source>
        <strain>Agy99</strain>
    </source>
</reference>
<evidence type="ECO:0000255" key="1">
    <source>
        <dbReference type="HAMAP-Rule" id="MF_00003"/>
    </source>
</evidence>
<evidence type="ECO:0000256" key="2">
    <source>
        <dbReference type="SAM" id="MobiDB-lite"/>
    </source>
</evidence>
<protein>
    <recommendedName>
        <fullName evidence="1">Ribosome-binding factor A</fullName>
    </recommendedName>
</protein>
<organism>
    <name type="scientific">Mycobacterium ulcerans (strain Agy99)</name>
    <dbReference type="NCBI Taxonomy" id="362242"/>
    <lineage>
        <taxon>Bacteria</taxon>
        <taxon>Bacillati</taxon>
        <taxon>Actinomycetota</taxon>
        <taxon>Actinomycetes</taxon>
        <taxon>Mycobacteriales</taxon>
        <taxon>Mycobacteriaceae</taxon>
        <taxon>Mycobacterium</taxon>
        <taxon>Mycobacterium ulcerans group</taxon>
    </lineage>
</organism>
<name>RBFA_MYCUA</name>
<comment type="function">
    <text evidence="1">One of several proteins that assist in the late maturation steps of the functional core of the 30S ribosomal subunit. Associates with free 30S ribosomal subunits (but not with 30S subunits that are part of 70S ribosomes or polysomes). Required for efficient processing of 16S rRNA. May interact with the 5'-terminal helix region of 16S rRNA.</text>
</comment>
<comment type="subunit">
    <text evidence="1">Monomer. Binds 30S ribosomal subunits, but not 50S ribosomal subunits or 70S ribosomes.</text>
</comment>
<comment type="subcellular location">
    <subcellularLocation>
        <location evidence="1">Cytoplasm</location>
    </subcellularLocation>
</comment>
<comment type="similarity">
    <text evidence="1">Belongs to the RbfA family.</text>
</comment>
<proteinExistence type="inferred from homology"/>
<accession>A0PQC5</accession>
<gene>
    <name evidence="1" type="primary">rbfA</name>
    <name type="ordered locus">MUL_2123</name>
</gene>
<dbReference type="EMBL" id="CP000325">
    <property type="protein sequence ID" value="ABL04544.1"/>
    <property type="molecule type" value="Genomic_DNA"/>
</dbReference>
<dbReference type="RefSeq" id="WP_011740161.1">
    <property type="nucleotide sequence ID" value="NC_008611.1"/>
</dbReference>
<dbReference type="SMR" id="A0PQC5"/>
<dbReference type="KEGG" id="mul:MUL_2123"/>
<dbReference type="eggNOG" id="COG0858">
    <property type="taxonomic scope" value="Bacteria"/>
</dbReference>
<dbReference type="HOGENOM" id="CLU_089475_0_0_11"/>
<dbReference type="Proteomes" id="UP000000765">
    <property type="component" value="Chromosome"/>
</dbReference>
<dbReference type="GO" id="GO:0005829">
    <property type="term" value="C:cytosol"/>
    <property type="evidence" value="ECO:0007669"/>
    <property type="project" value="TreeGrafter"/>
</dbReference>
<dbReference type="GO" id="GO:0043024">
    <property type="term" value="F:ribosomal small subunit binding"/>
    <property type="evidence" value="ECO:0007669"/>
    <property type="project" value="TreeGrafter"/>
</dbReference>
<dbReference type="GO" id="GO:0030490">
    <property type="term" value="P:maturation of SSU-rRNA"/>
    <property type="evidence" value="ECO:0007669"/>
    <property type="project" value="UniProtKB-UniRule"/>
</dbReference>
<dbReference type="FunFam" id="3.30.300.20:FF:000018">
    <property type="entry name" value="Ribosome-binding factor A"/>
    <property type="match status" value="1"/>
</dbReference>
<dbReference type="Gene3D" id="3.30.300.20">
    <property type="match status" value="1"/>
</dbReference>
<dbReference type="HAMAP" id="MF_00003">
    <property type="entry name" value="RbfA"/>
    <property type="match status" value="1"/>
</dbReference>
<dbReference type="InterPro" id="IPR015946">
    <property type="entry name" value="KH_dom-like_a/b"/>
</dbReference>
<dbReference type="InterPro" id="IPR000238">
    <property type="entry name" value="RbfA"/>
</dbReference>
<dbReference type="InterPro" id="IPR023799">
    <property type="entry name" value="RbfA_dom_sf"/>
</dbReference>
<dbReference type="InterPro" id="IPR020053">
    <property type="entry name" value="Ribosome-bd_factorA_CS"/>
</dbReference>
<dbReference type="NCBIfam" id="TIGR00082">
    <property type="entry name" value="rbfA"/>
    <property type="match status" value="1"/>
</dbReference>
<dbReference type="PANTHER" id="PTHR33515">
    <property type="entry name" value="RIBOSOME-BINDING FACTOR A, CHLOROPLASTIC-RELATED"/>
    <property type="match status" value="1"/>
</dbReference>
<dbReference type="PANTHER" id="PTHR33515:SF1">
    <property type="entry name" value="RIBOSOME-BINDING FACTOR A, CHLOROPLASTIC-RELATED"/>
    <property type="match status" value="1"/>
</dbReference>
<dbReference type="Pfam" id="PF02033">
    <property type="entry name" value="RBFA"/>
    <property type="match status" value="1"/>
</dbReference>
<dbReference type="SUPFAM" id="SSF89919">
    <property type="entry name" value="Ribosome-binding factor A, RbfA"/>
    <property type="match status" value="1"/>
</dbReference>
<dbReference type="PROSITE" id="PS01319">
    <property type="entry name" value="RBFA"/>
    <property type="match status" value="1"/>
</dbReference>